<accession>A5E867</accession>
<organism>
    <name type="scientific">Bradyrhizobium sp. (strain BTAi1 / ATCC BAA-1182)</name>
    <dbReference type="NCBI Taxonomy" id="288000"/>
    <lineage>
        <taxon>Bacteria</taxon>
        <taxon>Pseudomonadati</taxon>
        <taxon>Pseudomonadota</taxon>
        <taxon>Alphaproteobacteria</taxon>
        <taxon>Hyphomicrobiales</taxon>
        <taxon>Nitrobacteraceae</taxon>
        <taxon>Bradyrhizobium</taxon>
    </lineage>
</organism>
<keyword id="KW-0963">Cytoplasm</keyword>
<keyword id="KW-1185">Reference proteome</keyword>
<keyword id="KW-0690">Ribosome biogenesis</keyword>
<proteinExistence type="inferred from homology"/>
<comment type="function">
    <text evidence="1">One of several proteins that assist in the late maturation steps of the functional core of the 30S ribosomal subunit. Associates with free 30S ribosomal subunits (but not with 30S subunits that are part of 70S ribosomes or polysomes). Required for efficient processing of 16S rRNA. May interact with the 5'-terminal helix region of 16S rRNA.</text>
</comment>
<comment type="subunit">
    <text evidence="1">Monomer. Binds 30S ribosomal subunits, but not 50S ribosomal subunits or 70S ribosomes.</text>
</comment>
<comment type="subcellular location">
    <subcellularLocation>
        <location evidence="1">Cytoplasm</location>
    </subcellularLocation>
</comment>
<comment type="similarity">
    <text evidence="1">Belongs to the RbfA family.</text>
</comment>
<sequence>MPRHHQRGSTASGGSQRQLRVAETVRHAVADILSQGSAHDPDLEGHIITVPEVRMSPDLKLATIYIMPLGGRDTEIVLAALERNKKFLRGEIAHRVNLKFAPDIRFRADERFDEAERIEKLLRTPAVQRDLNSDSEES</sequence>
<protein>
    <recommendedName>
        <fullName evidence="1">Ribosome-binding factor A</fullName>
    </recommendedName>
</protein>
<reference key="1">
    <citation type="journal article" date="2007" name="Science">
        <title>Legumes symbioses: absence of nod genes in photosynthetic bradyrhizobia.</title>
        <authorList>
            <person name="Giraud E."/>
            <person name="Moulin L."/>
            <person name="Vallenet D."/>
            <person name="Barbe V."/>
            <person name="Cytryn E."/>
            <person name="Avarre J.-C."/>
            <person name="Jaubert M."/>
            <person name="Simon D."/>
            <person name="Cartieaux F."/>
            <person name="Prin Y."/>
            <person name="Bena G."/>
            <person name="Hannibal L."/>
            <person name="Fardoux J."/>
            <person name="Kojadinovic M."/>
            <person name="Vuillet L."/>
            <person name="Lajus A."/>
            <person name="Cruveiller S."/>
            <person name="Rouy Z."/>
            <person name="Mangenot S."/>
            <person name="Segurens B."/>
            <person name="Dossat C."/>
            <person name="Franck W.L."/>
            <person name="Chang W.-S."/>
            <person name="Saunders E."/>
            <person name="Bruce D."/>
            <person name="Richardson P."/>
            <person name="Normand P."/>
            <person name="Dreyfus B."/>
            <person name="Pignol D."/>
            <person name="Stacey G."/>
            <person name="Emerich D."/>
            <person name="Vermeglio A."/>
            <person name="Medigue C."/>
            <person name="Sadowsky M."/>
        </authorList>
    </citation>
    <scope>NUCLEOTIDE SEQUENCE [LARGE SCALE GENOMIC DNA]</scope>
    <source>
        <strain>BTAi1 / ATCC BAA-1182</strain>
    </source>
</reference>
<dbReference type="EMBL" id="CP000494">
    <property type="protein sequence ID" value="ABQ32361.1"/>
    <property type="molecule type" value="Genomic_DNA"/>
</dbReference>
<dbReference type="RefSeq" id="WP_011942585.1">
    <property type="nucleotide sequence ID" value="NC_009485.1"/>
</dbReference>
<dbReference type="SMR" id="A5E867"/>
<dbReference type="STRING" id="288000.BBta_0058"/>
<dbReference type="KEGG" id="bbt:BBta_0058"/>
<dbReference type="eggNOG" id="COG0858">
    <property type="taxonomic scope" value="Bacteria"/>
</dbReference>
<dbReference type="HOGENOM" id="CLU_089475_1_0_5"/>
<dbReference type="OrthoDB" id="9805051at2"/>
<dbReference type="Proteomes" id="UP000000246">
    <property type="component" value="Chromosome"/>
</dbReference>
<dbReference type="GO" id="GO:0005829">
    <property type="term" value="C:cytosol"/>
    <property type="evidence" value="ECO:0007669"/>
    <property type="project" value="TreeGrafter"/>
</dbReference>
<dbReference type="GO" id="GO:0043024">
    <property type="term" value="F:ribosomal small subunit binding"/>
    <property type="evidence" value="ECO:0007669"/>
    <property type="project" value="TreeGrafter"/>
</dbReference>
<dbReference type="GO" id="GO:0030490">
    <property type="term" value="P:maturation of SSU-rRNA"/>
    <property type="evidence" value="ECO:0007669"/>
    <property type="project" value="UniProtKB-UniRule"/>
</dbReference>
<dbReference type="Gene3D" id="3.30.300.20">
    <property type="match status" value="1"/>
</dbReference>
<dbReference type="HAMAP" id="MF_00003">
    <property type="entry name" value="RbfA"/>
    <property type="match status" value="1"/>
</dbReference>
<dbReference type="InterPro" id="IPR015946">
    <property type="entry name" value="KH_dom-like_a/b"/>
</dbReference>
<dbReference type="InterPro" id="IPR000238">
    <property type="entry name" value="RbfA"/>
</dbReference>
<dbReference type="InterPro" id="IPR023799">
    <property type="entry name" value="RbfA_dom_sf"/>
</dbReference>
<dbReference type="InterPro" id="IPR020053">
    <property type="entry name" value="Ribosome-bd_factorA_CS"/>
</dbReference>
<dbReference type="NCBIfam" id="NF001802">
    <property type="entry name" value="PRK00521.2-5"/>
    <property type="match status" value="1"/>
</dbReference>
<dbReference type="NCBIfam" id="TIGR00082">
    <property type="entry name" value="rbfA"/>
    <property type="match status" value="1"/>
</dbReference>
<dbReference type="PANTHER" id="PTHR33515">
    <property type="entry name" value="RIBOSOME-BINDING FACTOR A, CHLOROPLASTIC-RELATED"/>
    <property type="match status" value="1"/>
</dbReference>
<dbReference type="PANTHER" id="PTHR33515:SF1">
    <property type="entry name" value="RIBOSOME-BINDING FACTOR A, CHLOROPLASTIC-RELATED"/>
    <property type="match status" value="1"/>
</dbReference>
<dbReference type="Pfam" id="PF02033">
    <property type="entry name" value="RBFA"/>
    <property type="match status" value="1"/>
</dbReference>
<dbReference type="SUPFAM" id="SSF89919">
    <property type="entry name" value="Ribosome-binding factor A, RbfA"/>
    <property type="match status" value="1"/>
</dbReference>
<dbReference type="PROSITE" id="PS01319">
    <property type="entry name" value="RBFA"/>
    <property type="match status" value="1"/>
</dbReference>
<evidence type="ECO:0000255" key="1">
    <source>
        <dbReference type="HAMAP-Rule" id="MF_00003"/>
    </source>
</evidence>
<name>RBFA_BRASB</name>
<gene>
    <name evidence="1" type="primary">rbfA</name>
    <name type="ordered locus">BBta_0058</name>
</gene>
<feature type="chain" id="PRO_1000000076" description="Ribosome-binding factor A">
    <location>
        <begin position="1"/>
        <end position="138"/>
    </location>
</feature>